<reference key="1">
    <citation type="journal article" date="2011" name="MBio">
        <title>Novel metabolic attributes of the genus Cyanothece, comprising a group of unicellular nitrogen-fixing Cyanobacteria.</title>
        <authorList>
            <person name="Bandyopadhyay A."/>
            <person name="Elvitigala T."/>
            <person name="Welsh E."/>
            <person name="Stockel J."/>
            <person name="Liberton M."/>
            <person name="Min H."/>
            <person name="Sherman L.A."/>
            <person name="Pakrasi H.B."/>
        </authorList>
    </citation>
    <scope>NUCLEOTIDE SEQUENCE [LARGE SCALE GENOMIC DNA]</scope>
    <source>
        <strain>PCC 8801 / RF-1</strain>
    </source>
</reference>
<evidence type="ECO:0000255" key="1">
    <source>
        <dbReference type="HAMAP-Rule" id="MF_00014"/>
    </source>
</evidence>
<accession>B7K5W1</accession>
<gene>
    <name evidence="1" type="primary">rimM</name>
    <name type="ordered locus">PCC8801_4078</name>
</gene>
<dbReference type="EMBL" id="CP001287">
    <property type="protein sequence ID" value="ACK68014.1"/>
    <property type="molecule type" value="Genomic_DNA"/>
</dbReference>
<dbReference type="RefSeq" id="WP_012597267.1">
    <property type="nucleotide sequence ID" value="NC_011726.1"/>
</dbReference>
<dbReference type="SMR" id="B7K5W1"/>
<dbReference type="STRING" id="41431.PCC8801_4078"/>
<dbReference type="KEGG" id="cyp:PCC8801_4078"/>
<dbReference type="eggNOG" id="COG0806">
    <property type="taxonomic scope" value="Bacteria"/>
</dbReference>
<dbReference type="HOGENOM" id="CLU_077636_3_0_3"/>
<dbReference type="OrthoDB" id="9810331at2"/>
<dbReference type="Proteomes" id="UP000008204">
    <property type="component" value="Chromosome"/>
</dbReference>
<dbReference type="GO" id="GO:0005737">
    <property type="term" value="C:cytoplasm"/>
    <property type="evidence" value="ECO:0007669"/>
    <property type="project" value="UniProtKB-SubCell"/>
</dbReference>
<dbReference type="GO" id="GO:0005840">
    <property type="term" value="C:ribosome"/>
    <property type="evidence" value="ECO:0007669"/>
    <property type="project" value="InterPro"/>
</dbReference>
<dbReference type="GO" id="GO:0043022">
    <property type="term" value="F:ribosome binding"/>
    <property type="evidence" value="ECO:0007669"/>
    <property type="project" value="InterPro"/>
</dbReference>
<dbReference type="GO" id="GO:0042274">
    <property type="term" value="P:ribosomal small subunit biogenesis"/>
    <property type="evidence" value="ECO:0007669"/>
    <property type="project" value="UniProtKB-UniRule"/>
</dbReference>
<dbReference type="GO" id="GO:0006364">
    <property type="term" value="P:rRNA processing"/>
    <property type="evidence" value="ECO:0007669"/>
    <property type="project" value="UniProtKB-UniRule"/>
</dbReference>
<dbReference type="Gene3D" id="2.30.30.240">
    <property type="entry name" value="PRC-barrel domain"/>
    <property type="match status" value="1"/>
</dbReference>
<dbReference type="Gene3D" id="2.40.30.60">
    <property type="entry name" value="RimM"/>
    <property type="match status" value="1"/>
</dbReference>
<dbReference type="HAMAP" id="MF_00014">
    <property type="entry name" value="Ribosome_mat_RimM"/>
    <property type="match status" value="1"/>
</dbReference>
<dbReference type="InterPro" id="IPR027275">
    <property type="entry name" value="PRC-brl_dom"/>
</dbReference>
<dbReference type="InterPro" id="IPR011033">
    <property type="entry name" value="PRC_barrel-like_sf"/>
</dbReference>
<dbReference type="InterPro" id="IPR011961">
    <property type="entry name" value="RimM"/>
</dbReference>
<dbReference type="InterPro" id="IPR002676">
    <property type="entry name" value="RimM_N"/>
</dbReference>
<dbReference type="InterPro" id="IPR036976">
    <property type="entry name" value="RimM_N_sf"/>
</dbReference>
<dbReference type="InterPro" id="IPR009000">
    <property type="entry name" value="Transl_B-barrel_sf"/>
</dbReference>
<dbReference type="NCBIfam" id="TIGR02273">
    <property type="entry name" value="16S_RimM"/>
    <property type="match status" value="1"/>
</dbReference>
<dbReference type="PANTHER" id="PTHR33692">
    <property type="entry name" value="RIBOSOME MATURATION FACTOR RIMM"/>
    <property type="match status" value="1"/>
</dbReference>
<dbReference type="PANTHER" id="PTHR33692:SF1">
    <property type="entry name" value="RIBOSOME MATURATION FACTOR RIMM"/>
    <property type="match status" value="1"/>
</dbReference>
<dbReference type="Pfam" id="PF05239">
    <property type="entry name" value="PRC"/>
    <property type="match status" value="1"/>
</dbReference>
<dbReference type="Pfam" id="PF01782">
    <property type="entry name" value="RimM"/>
    <property type="match status" value="1"/>
</dbReference>
<dbReference type="SUPFAM" id="SSF50346">
    <property type="entry name" value="PRC-barrel domain"/>
    <property type="match status" value="1"/>
</dbReference>
<dbReference type="SUPFAM" id="SSF50447">
    <property type="entry name" value="Translation proteins"/>
    <property type="match status" value="1"/>
</dbReference>
<organism>
    <name type="scientific">Rippkaea orientalis (strain PCC 8801 / RF-1)</name>
    <name type="common">Cyanothece sp. (strain PCC 8801)</name>
    <dbReference type="NCBI Taxonomy" id="41431"/>
    <lineage>
        <taxon>Bacteria</taxon>
        <taxon>Bacillati</taxon>
        <taxon>Cyanobacteriota</taxon>
        <taxon>Cyanophyceae</taxon>
        <taxon>Oscillatoriophycideae</taxon>
        <taxon>Chroococcales</taxon>
        <taxon>Aphanothecaceae</taxon>
        <taxon>Rippkaea</taxon>
        <taxon>Rippkaea orientalis</taxon>
    </lineage>
</organism>
<feature type="chain" id="PRO_1000196557" description="Ribosome maturation factor RimM">
    <location>
        <begin position="1"/>
        <end position="186"/>
    </location>
</feature>
<feature type="domain" description="PRC barrel" evidence="1">
    <location>
        <begin position="100"/>
        <end position="182"/>
    </location>
</feature>
<comment type="function">
    <text evidence="1">An accessory protein needed during the final step in the assembly of 30S ribosomal subunit, possibly for assembly of the head region. Essential for efficient processing of 16S rRNA. May be needed both before and after RbfA during the maturation of 16S rRNA. It has affinity for free ribosomal 30S subunits but not for 70S ribosomes.</text>
</comment>
<comment type="subunit">
    <text evidence="1">Binds ribosomal protein uS19.</text>
</comment>
<comment type="subcellular location">
    <subcellularLocation>
        <location evidence="1">Cytoplasm</location>
    </subcellularLocation>
</comment>
<comment type="domain">
    <text evidence="1">The PRC barrel domain binds ribosomal protein uS19.</text>
</comment>
<comment type="similarity">
    <text evidence="1">Belongs to the RimM family.</text>
</comment>
<sequence>MDNSESWLEIGRIVAAQGLKGELKVMSSSDFPERFEKPGTRWLQSPDRLSIQEVELVRGRYVPGKNLYVIKLAEIADRTQAETLRDYTLLVPSSDRPQLNEGEYHVSDLINLTVYHQQTGEEIGVVTDMLSAGNDLLEVQLNTLNSSENTSSKKVLIPFVYEIVPVVDLVNKRIEINPPVGLLELS</sequence>
<proteinExistence type="inferred from homology"/>
<protein>
    <recommendedName>
        <fullName evidence="1">Ribosome maturation factor RimM</fullName>
    </recommendedName>
</protein>
<keyword id="KW-0143">Chaperone</keyword>
<keyword id="KW-0963">Cytoplasm</keyword>
<keyword id="KW-1185">Reference proteome</keyword>
<keyword id="KW-0690">Ribosome biogenesis</keyword>
<keyword id="KW-0698">rRNA processing</keyword>
<name>RIMM_RIPO1</name>